<protein>
    <recommendedName>
        <fullName evidence="1">2,3-bisphosphoglycerate-dependent phosphoglycerate mutase</fullName>
        <shortName evidence="1">BPG-dependent PGAM</shortName>
        <shortName evidence="1">PGAM</shortName>
        <shortName evidence="1">Phosphoglyceromutase</shortName>
        <shortName evidence="1">dPGM</shortName>
        <ecNumber evidence="1">5.4.2.11</ecNumber>
    </recommendedName>
</protein>
<name>GPMA_METHJ</name>
<proteinExistence type="inferred from homology"/>
<evidence type="ECO:0000255" key="1">
    <source>
        <dbReference type="HAMAP-Rule" id="MF_01039"/>
    </source>
</evidence>
<keyword id="KW-0312">Gluconeogenesis</keyword>
<keyword id="KW-0324">Glycolysis</keyword>
<keyword id="KW-0413">Isomerase</keyword>
<keyword id="KW-1185">Reference proteome</keyword>
<gene>
    <name evidence="1" type="primary">gpmA</name>
    <name type="ordered locus">Mhun_2324</name>
</gene>
<comment type="function">
    <text evidence="1">Catalyzes the interconversion of 2-phosphoglycerate and 3-phosphoglycerate.</text>
</comment>
<comment type="catalytic activity">
    <reaction evidence="1">
        <text>(2R)-2-phosphoglycerate = (2R)-3-phosphoglycerate</text>
        <dbReference type="Rhea" id="RHEA:15901"/>
        <dbReference type="ChEBI" id="CHEBI:58272"/>
        <dbReference type="ChEBI" id="CHEBI:58289"/>
        <dbReference type="EC" id="5.4.2.11"/>
    </reaction>
</comment>
<comment type="pathway">
    <text evidence="1">Carbohydrate degradation; glycolysis; pyruvate from D-glyceraldehyde 3-phosphate: step 3/5.</text>
</comment>
<comment type="similarity">
    <text evidence="1">Belongs to the phosphoglycerate mutase family. BPG-dependent PGAM subfamily.</text>
</comment>
<organism>
    <name type="scientific">Methanospirillum hungatei JF-1 (strain ATCC 27890 / DSM 864 / NBRC 100397 / JF-1)</name>
    <dbReference type="NCBI Taxonomy" id="323259"/>
    <lineage>
        <taxon>Archaea</taxon>
        <taxon>Methanobacteriati</taxon>
        <taxon>Methanobacteriota</taxon>
        <taxon>Stenosarchaea group</taxon>
        <taxon>Methanomicrobia</taxon>
        <taxon>Methanomicrobiales</taxon>
        <taxon>Methanospirillaceae</taxon>
        <taxon>Methanospirillum</taxon>
    </lineage>
</organism>
<dbReference type="EC" id="5.4.2.11" evidence="1"/>
<dbReference type="EMBL" id="CP000254">
    <property type="protein sequence ID" value="ABD42029.1"/>
    <property type="molecule type" value="Genomic_DNA"/>
</dbReference>
<dbReference type="RefSeq" id="WP_011449287.1">
    <property type="nucleotide sequence ID" value="NC_007796.1"/>
</dbReference>
<dbReference type="SMR" id="Q2FTH0"/>
<dbReference type="STRING" id="323259.Mhun_2324"/>
<dbReference type="EnsemblBacteria" id="ABD42029">
    <property type="protein sequence ID" value="ABD42029"/>
    <property type="gene ID" value="Mhun_2324"/>
</dbReference>
<dbReference type="GeneID" id="3923042"/>
<dbReference type="KEGG" id="mhu:Mhun_2324"/>
<dbReference type="eggNOG" id="arCOG01993">
    <property type="taxonomic scope" value="Archaea"/>
</dbReference>
<dbReference type="HOGENOM" id="CLU_033323_1_1_2"/>
<dbReference type="InParanoid" id="Q2FTH0"/>
<dbReference type="OrthoDB" id="304253at2157"/>
<dbReference type="UniPathway" id="UPA00109">
    <property type="reaction ID" value="UER00186"/>
</dbReference>
<dbReference type="Proteomes" id="UP000001941">
    <property type="component" value="Chromosome"/>
</dbReference>
<dbReference type="GO" id="GO:0004619">
    <property type="term" value="F:phosphoglycerate mutase activity"/>
    <property type="evidence" value="ECO:0007669"/>
    <property type="project" value="UniProtKB-EC"/>
</dbReference>
<dbReference type="GO" id="GO:0006094">
    <property type="term" value="P:gluconeogenesis"/>
    <property type="evidence" value="ECO:0007669"/>
    <property type="project" value="UniProtKB-UniRule"/>
</dbReference>
<dbReference type="GO" id="GO:0006096">
    <property type="term" value="P:glycolytic process"/>
    <property type="evidence" value="ECO:0007669"/>
    <property type="project" value="UniProtKB-UniRule"/>
</dbReference>
<dbReference type="CDD" id="cd07067">
    <property type="entry name" value="HP_PGM_like"/>
    <property type="match status" value="1"/>
</dbReference>
<dbReference type="FunFam" id="3.40.50.1240:FF:000003">
    <property type="entry name" value="2,3-bisphosphoglycerate-dependent phosphoglycerate mutase"/>
    <property type="match status" value="1"/>
</dbReference>
<dbReference type="Gene3D" id="3.40.50.1240">
    <property type="entry name" value="Phosphoglycerate mutase-like"/>
    <property type="match status" value="1"/>
</dbReference>
<dbReference type="HAMAP" id="MF_01039">
    <property type="entry name" value="PGAM_GpmA"/>
    <property type="match status" value="1"/>
</dbReference>
<dbReference type="InterPro" id="IPR013078">
    <property type="entry name" value="His_Pase_superF_clade-1"/>
</dbReference>
<dbReference type="InterPro" id="IPR029033">
    <property type="entry name" value="His_PPase_superfam"/>
</dbReference>
<dbReference type="InterPro" id="IPR001345">
    <property type="entry name" value="PG/BPGM_mutase_AS"/>
</dbReference>
<dbReference type="InterPro" id="IPR005952">
    <property type="entry name" value="Phosphogly_mut1"/>
</dbReference>
<dbReference type="NCBIfam" id="TIGR01258">
    <property type="entry name" value="pgm_1"/>
    <property type="match status" value="1"/>
</dbReference>
<dbReference type="NCBIfam" id="NF010713">
    <property type="entry name" value="PRK14115.1"/>
    <property type="match status" value="1"/>
</dbReference>
<dbReference type="PANTHER" id="PTHR11931">
    <property type="entry name" value="PHOSPHOGLYCERATE MUTASE"/>
    <property type="match status" value="1"/>
</dbReference>
<dbReference type="Pfam" id="PF00300">
    <property type="entry name" value="His_Phos_1"/>
    <property type="match status" value="1"/>
</dbReference>
<dbReference type="PIRSF" id="PIRSF000709">
    <property type="entry name" value="6PFK_2-Ptase"/>
    <property type="match status" value="1"/>
</dbReference>
<dbReference type="SMART" id="SM00855">
    <property type="entry name" value="PGAM"/>
    <property type="match status" value="1"/>
</dbReference>
<dbReference type="SUPFAM" id="SSF53254">
    <property type="entry name" value="Phosphoglycerate mutase-like"/>
    <property type="match status" value="1"/>
</dbReference>
<dbReference type="PROSITE" id="PS00175">
    <property type="entry name" value="PG_MUTASE"/>
    <property type="match status" value="1"/>
</dbReference>
<reference key="1">
    <citation type="journal article" date="2016" name="Stand. Genomic Sci.">
        <title>Complete genome sequence of Methanospirillum hungatei type strain JF1.</title>
        <authorList>
            <person name="Gunsalus R.P."/>
            <person name="Cook L.E."/>
            <person name="Crable B."/>
            <person name="Rohlin L."/>
            <person name="McDonald E."/>
            <person name="Mouttaki H."/>
            <person name="Sieber J.R."/>
            <person name="Poweleit N."/>
            <person name="Zhou H."/>
            <person name="Lapidus A.L."/>
            <person name="Daligault H.E."/>
            <person name="Land M."/>
            <person name="Gilna P."/>
            <person name="Ivanova N."/>
            <person name="Kyrpides N."/>
            <person name="Culley D.E."/>
            <person name="McInerney M.J."/>
        </authorList>
    </citation>
    <scope>NUCLEOTIDE SEQUENCE [LARGE SCALE GENOMIC DNA]</scope>
    <source>
        <strain>ATCC 27890 / DSM 864 / NBRC 100397 / JF-1</strain>
    </source>
</reference>
<accession>Q2FTH0</accession>
<sequence length="248" mass="28878">MYTLVLIRHGESLWNRENRFTGWRDIDLSPQGIDEARAAGKALREQGFEFDLAYTSVLKRAIRTLWLIQEEMDLMWIPVIRTWRLNERHYGALTGLNKIETVEKYGEQQVHIWRRSYDIPPPAYTPDNLDNPSYHRRYQEIKRSDLPMTECLKDTVARFIPYWNDEIAPVIRSGKRVLITAHGNSLRALVKHLDNISDTDIPDLNIPTGIPLVYELDDNLKPVRSYYLGDEEKVKAAMEAVKNQGKAK</sequence>
<feature type="chain" id="PRO_1000064074" description="2,3-bisphosphoglycerate-dependent phosphoglycerate mutase">
    <location>
        <begin position="1"/>
        <end position="248"/>
    </location>
</feature>
<feature type="active site" description="Tele-phosphohistidine intermediate" evidence="1">
    <location>
        <position position="9"/>
    </location>
</feature>
<feature type="active site" description="Proton donor/acceptor" evidence="1">
    <location>
        <position position="87"/>
    </location>
</feature>
<feature type="binding site" evidence="1">
    <location>
        <begin position="8"/>
        <end position="15"/>
    </location>
    <ligand>
        <name>substrate</name>
    </ligand>
</feature>
<feature type="binding site" evidence="1">
    <location>
        <begin position="21"/>
        <end position="22"/>
    </location>
    <ligand>
        <name>substrate</name>
    </ligand>
</feature>
<feature type="binding site" evidence="1">
    <location>
        <position position="60"/>
    </location>
    <ligand>
        <name>substrate</name>
    </ligand>
</feature>
<feature type="binding site" evidence="1">
    <location>
        <begin position="87"/>
        <end position="90"/>
    </location>
    <ligand>
        <name>substrate</name>
    </ligand>
</feature>
<feature type="binding site" evidence="1">
    <location>
        <position position="98"/>
    </location>
    <ligand>
        <name>substrate</name>
    </ligand>
</feature>
<feature type="binding site" evidence="1">
    <location>
        <begin position="114"/>
        <end position="115"/>
    </location>
    <ligand>
        <name>substrate</name>
    </ligand>
</feature>
<feature type="binding site" evidence="1">
    <location>
        <begin position="183"/>
        <end position="184"/>
    </location>
    <ligand>
        <name>substrate</name>
    </ligand>
</feature>
<feature type="site" description="Transition state stabilizer" evidence="1">
    <location>
        <position position="182"/>
    </location>
</feature>